<dbReference type="EMBL" id="CR857444">
    <property type="protein sequence ID" value="CAH89735.1"/>
    <property type="molecule type" value="mRNA"/>
</dbReference>
<dbReference type="EMBL" id="CR860085">
    <property type="protein sequence ID" value="CAH92231.1"/>
    <property type="molecule type" value="mRNA"/>
</dbReference>
<dbReference type="RefSeq" id="NP_001127527.1">
    <property type="nucleotide sequence ID" value="NM_001134055.1"/>
</dbReference>
<dbReference type="SMR" id="Q5RES2"/>
<dbReference type="STRING" id="9601.ENSPPYP00000024383"/>
<dbReference type="ESTHER" id="ponab-SPG21">
    <property type="family name" value="Maspardin-ACP33-SPG21_like"/>
</dbReference>
<dbReference type="GeneID" id="100174603"/>
<dbReference type="KEGG" id="pon:100174603"/>
<dbReference type="CTD" id="51324"/>
<dbReference type="eggNOG" id="ENOG502QPSD">
    <property type="taxonomic scope" value="Eukaryota"/>
</dbReference>
<dbReference type="InParanoid" id="Q5RES2"/>
<dbReference type="OrthoDB" id="10264550at2759"/>
<dbReference type="Proteomes" id="UP000001595">
    <property type="component" value="Unplaced"/>
</dbReference>
<dbReference type="GO" id="GO:0005829">
    <property type="term" value="C:cytosol"/>
    <property type="evidence" value="ECO:0000250"/>
    <property type="project" value="UniProtKB"/>
</dbReference>
<dbReference type="GO" id="GO:0030140">
    <property type="term" value="C:trans-Golgi network transport vesicle"/>
    <property type="evidence" value="ECO:0000250"/>
    <property type="project" value="UniProtKB"/>
</dbReference>
<dbReference type="GO" id="GO:0042609">
    <property type="term" value="F:CD4 receptor binding"/>
    <property type="evidence" value="ECO:0000250"/>
    <property type="project" value="UniProtKB"/>
</dbReference>
<dbReference type="FunFam" id="3.40.50.1820:FF:000040">
    <property type="entry name" value="SPG21, maspardin"/>
    <property type="match status" value="1"/>
</dbReference>
<dbReference type="Gene3D" id="3.40.50.1820">
    <property type="entry name" value="alpha/beta hydrolase"/>
    <property type="match status" value="1"/>
</dbReference>
<dbReference type="InterPro" id="IPR000073">
    <property type="entry name" value="AB_hydrolase_1"/>
</dbReference>
<dbReference type="InterPro" id="IPR029058">
    <property type="entry name" value="AB_hydrolase_fold"/>
</dbReference>
<dbReference type="InterPro" id="IPR026151">
    <property type="entry name" value="Maspardin"/>
</dbReference>
<dbReference type="PANTHER" id="PTHR15913">
    <property type="entry name" value="ACID CLUSTER PROTEIN 33"/>
    <property type="match status" value="1"/>
</dbReference>
<dbReference type="PANTHER" id="PTHR15913:SF0">
    <property type="entry name" value="MASPARDIN"/>
    <property type="match status" value="1"/>
</dbReference>
<dbReference type="Pfam" id="PF00561">
    <property type="entry name" value="Abhydrolase_1"/>
    <property type="match status" value="1"/>
</dbReference>
<dbReference type="SUPFAM" id="SSF53474">
    <property type="entry name" value="alpha/beta-Hydrolases"/>
    <property type="match status" value="1"/>
</dbReference>
<name>SPG21_PONAB</name>
<gene>
    <name type="primary">SPG21</name>
</gene>
<proteinExistence type="evidence at transcript level"/>
<protein>
    <recommendedName>
        <fullName>Maspardin</fullName>
    </recommendedName>
    <alternativeName>
        <fullName>Spastic paraplegia 21 autosomal recessive Mast syndrome protein homolog</fullName>
    </alternativeName>
</protein>
<sequence length="308" mass="34902">MGEIKVSPDYNWFRGTVPLKKIIVDDDDSKIWSLYDAGPRSIRCPLIFLPPVSGTADVFFRQILALTGWGYRVIALQYPVYWDHLEFCDGFRKLLDHLQLDKVHLFGASLGGFLAQKFAEYTHKSPRVHSLILCNSFSDTSIFNQTWTANSFWLMPAFMLKKIVLGNFSSGPVDPMMADAIDFMVDRLESLGQSELASRLTLNCQNSYVEPHKIRDIPVTIMDVFGQSALSTEAKEEMYKLYPNARRAHLKTGGNFPYLCRSAEVNLYVQIHLLQFHGTKYAAIDPSMVSAEELEVQKGSLGISQEEQ</sequence>
<accession>Q5RES2</accession>
<accession>Q5R7M9</accession>
<organism>
    <name type="scientific">Pongo abelii</name>
    <name type="common">Sumatran orangutan</name>
    <name type="synonym">Pongo pygmaeus abelii</name>
    <dbReference type="NCBI Taxonomy" id="9601"/>
    <lineage>
        <taxon>Eukaryota</taxon>
        <taxon>Metazoa</taxon>
        <taxon>Chordata</taxon>
        <taxon>Craniata</taxon>
        <taxon>Vertebrata</taxon>
        <taxon>Euteleostomi</taxon>
        <taxon>Mammalia</taxon>
        <taxon>Eutheria</taxon>
        <taxon>Euarchontoglires</taxon>
        <taxon>Primates</taxon>
        <taxon>Haplorrhini</taxon>
        <taxon>Catarrhini</taxon>
        <taxon>Hominidae</taxon>
        <taxon>Pongo</taxon>
    </lineage>
</organism>
<evidence type="ECO:0000250" key="1"/>
<evidence type="ECO:0000250" key="2">
    <source>
        <dbReference type="UniProtKB" id="Q9NZD8"/>
    </source>
</evidence>
<evidence type="ECO:0000255" key="3"/>
<evidence type="ECO:0000305" key="4"/>
<comment type="function">
    <text evidence="1">May play a role as a negative regulatory factor in CD4-dependent T-cell activation.</text>
</comment>
<comment type="subunit">
    <text evidence="1">Interacts with CD4. Interacts with ALDH16A1.</text>
</comment>
<comment type="subcellular location">
    <subcellularLocation>
        <location evidence="1">Cytoplasm</location>
    </subcellularLocation>
</comment>
<comment type="similarity">
    <text evidence="4">Belongs to the AB hydrolase superfamily.</text>
</comment>
<reference key="1">
    <citation type="submission" date="2004-11" db="EMBL/GenBank/DDBJ databases">
        <authorList>
            <consortium name="The German cDNA consortium"/>
        </authorList>
    </citation>
    <scope>NUCLEOTIDE SEQUENCE [LARGE SCALE MRNA]</scope>
    <source>
        <tissue>Kidney</tissue>
    </source>
</reference>
<keyword id="KW-0963">Cytoplasm</keyword>
<keyword id="KW-0597">Phosphoprotein</keyword>
<keyword id="KW-1185">Reference proteome</keyword>
<feature type="chain" id="PRO_0000227983" description="Maspardin">
    <location>
        <begin position="1"/>
        <end position="308"/>
    </location>
</feature>
<feature type="domain" description="AB hydrolase-1" evidence="3">
    <location>
        <begin position="87"/>
        <end position="159"/>
    </location>
</feature>
<feature type="modified residue" description="Phosphoserine" evidence="2">
    <location>
        <position position="304"/>
    </location>
</feature>
<feature type="sequence conflict" description="In Ref. 1; CAH92231." evidence="4" ref="1">
    <original>G</original>
    <variation>D</variation>
    <location>
        <position position="226"/>
    </location>
</feature>
<feature type="sequence conflict" description="In Ref. 1; CAH92231." evidence="4" ref="1">
    <original>E</original>
    <variation>G</variation>
    <location>
        <position position="233"/>
    </location>
</feature>